<sequence>NLNRTNWPKKIFNIYWNVPTYFCHQHDVYFNELTKFDIKYNPKGNYRGDTISLFYDPGNFPAMVPLKNGTYDIRNEGVPQKGNITVHLQQFTKELDEIYPKKISGGIGVINFNKWRPIFRRNVNNLKINKEVSIDLVRKEHPKWDKSMIETEASNRFEKSARIFMEKTLKLAKDIRNKNKWGYHGYPYCPTASTGNPSFDCDALAMNENDKLSWLFKYQDVLLPSVYVKHVLKPEEKIGLVRGSVKEAVRISKKFEHLPKVLSYWWYAYEDKMDTFLTETDVKNTFREILINGGDGIIIWGTMHDLNKEKCEKLKQYLSTILGPIAFKVMEAVKKRTPLNF</sequence>
<dbReference type="EC" id="3.2.1.35" evidence="7"/>
<dbReference type="SMR" id="C0HLL4"/>
<dbReference type="iPTMnet" id="C0HLL4"/>
<dbReference type="GO" id="GO:0005576">
    <property type="term" value="C:extracellular region"/>
    <property type="evidence" value="ECO:0007669"/>
    <property type="project" value="UniProtKB-SubCell"/>
</dbReference>
<dbReference type="GO" id="GO:0004415">
    <property type="term" value="F:hyalurononglucosaminidase activity"/>
    <property type="evidence" value="ECO:0007669"/>
    <property type="project" value="UniProtKB-EC"/>
</dbReference>
<dbReference type="GO" id="GO:0005975">
    <property type="term" value="P:carbohydrate metabolic process"/>
    <property type="evidence" value="ECO:0007669"/>
    <property type="project" value="InterPro"/>
</dbReference>
<dbReference type="GO" id="GO:0006952">
    <property type="term" value="P:defense response"/>
    <property type="evidence" value="ECO:0007669"/>
    <property type="project" value="InterPro"/>
</dbReference>
<dbReference type="GO" id="GO:0030214">
    <property type="term" value="P:hyaluronan catabolic process"/>
    <property type="evidence" value="ECO:0007669"/>
    <property type="project" value="TreeGrafter"/>
</dbReference>
<dbReference type="Gene3D" id="3.20.20.70">
    <property type="entry name" value="Aldolase class I"/>
    <property type="match status" value="1"/>
</dbReference>
<dbReference type="InterPro" id="IPR013785">
    <property type="entry name" value="Aldolase_TIM"/>
</dbReference>
<dbReference type="InterPro" id="IPR017853">
    <property type="entry name" value="Glycoside_hydrolase_SF"/>
</dbReference>
<dbReference type="InterPro" id="IPR018155">
    <property type="entry name" value="Hyaluronidase"/>
</dbReference>
<dbReference type="InterPro" id="IPR001329">
    <property type="entry name" value="Venom_Hyaluronidase"/>
</dbReference>
<dbReference type="PANTHER" id="PTHR11769">
    <property type="entry name" value="HYALURONIDASE"/>
    <property type="match status" value="1"/>
</dbReference>
<dbReference type="PANTHER" id="PTHR11769:SF35">
    <property type="entry name" value="HYALURONIDASE"/>
    <property type="match status" value="1"/>
</dbReference>
<dbReference type="Pfam" id="PF01630">
    <property type="entry name" value="Glyco_hydro_56"/>
    <property type="match status" value="1"/>
</dbReference>
<dbReference type="PIRSF" id="PIRSF038193">
    <property type="entry name" value="Hyaluronidase"/>
    <property type="match status" value="1"/>
</dbReference>
<dbReference type="PRINTS" id="PR00846">
    <property type="entry name" value="GLHYDRLASE56"/>
</dbReference>
<dbReference type="PRINTS" id="PR00847">
    <property type="entry name" value="HYALURONDASE"/>
</dbReference>
<dbReference type="SUPFAM" id="SSF51445">
    <property type="entry name" value="(Trans)glycosidases"/>
    <property type="match status" value="1"/>
</dbReference>
<protein>
    <recommendedName>
        <fullName evidence="5">Hyaluronidase A</fullName>
        <ecNumber evidence="7">3.2.1.35</ecNumber>
    </recommendedName>
    <alternativeName>
        <fullName evidence="5">Vesp v 2A</fullName>
    </alternativeName>
</protein>
<keyword id="KW-0903">Direct protein sequencing</keyword>
<keyword id="KW-1015">Disulfide bond</keyword>
<keyword id="KW-0325">Glycoprotein</keyword>
<keyword id="KW-0378">Hydrolase</keyword>
<keyword id="KW-0964">Secreted</keyword>
<name>HUGA_VESVE</name>
<comment type="function">
    <text evidence="7">May hydrolyze high molecular weight hyaluronic acid to produce small oligosaccharides.</text>
</comment>
<comment type="catalytic activity">
    <reaction evidence="7">
        <text>Random hydrolysis of (1-&gt;4)-linkages between N-acetyl-beta-D-glucosamine and D-glucuronate residues in hyaluronate.</text>
        <dbReference type="EC" id="3.2.1.35"/>
    </reaction>
</comment>
<comment type="subcellular location">
    <subcellularLocation>
        <location evidence="3">Secreted</location>
    </subcellularLocation>
</comment>
<comment type="tissue specificity">
    <text evidence="7">Expressed by the venom gland.</text>
</comment>
<comment type="similarity">
    <text evidence="6">Belongs to the glycosyl hydrolase 56 family.</text>
</comment>
<comment type="caution">
    <text evidence="7">Lacks the typical Glu active site in position 113 that is replaced by an Asn residue. Some catalytic activity was found but in a fraction that contained both Hyaluronidase A and Hyaluronidase B.</text>
</comment>
<evidence type="ECO:0000250" key="1">
    <source>
        <dbReference type="UniProtKB" id="Q08169"/>
    </source>
</evidence>
<evidence type="ECO:0000255" key="2">
    <source>
        <dbReference type="PROSITE-ProRule" id="PRU00498"/>
    </source>
</evidence>
<evidence type="ECO:0000269" key="3">
    <source>
    </source>
</evidence>
<evidence type="ECO:0000303" key="4">
    <source>
    </source>
</evidence>
<evidence type="ECO:0000303" key="5">
    <source>
    </source>
</evidence>
<evidence type="ECO:0000305" key="6"/>
<evidence type="ECO:0000305" key="7">
    <source>
    </source>
</evidence>
<organism>
    <name type="scientific">Vespa velutina</name>
    <name type="common">Asian yellow-legged hornet</name>
    <dbReference type="NCBI Taxonomy" id="202808"/>
    <lineage>
        <taxon>Eukaryota</taxon>
        <taxon>Metazoa</taxon>
        <taxon>Ecdysozoa</taxon>
        <taxon>Arthropoda</taxon>
        <taxon>Hexapoda</taxon>
        <taxon>Insecta</taxon>
        <taxon>Pterygota</taxon>
        <taxon>Neoptera</taxon>
        <taxon>Endopterygota</taxon>
        <taxon>Hymenoptera</taxon>
        <taxon>Apocrita</taxon>
        <taxon>Aculeata</taxon>
        <taxon>Vespoidea</taxon>
        <taxon>Vespidae</taxon>
        <taxon>Vespinae</taxon>
        <taxon>Vespa</taxon>
    </lineage>
</organism>
<reference evidence="6" key="1">
    <citation type="journal article" date="2015" name="Sci. Rep.">
        <title>Deciphering the venomic transcriptome of killer-wasp Vespa velutina.</title>
        <authorList>
            <person name="Liu Z."/>
            <person name="Chen S."/>
            <person name="Zhou Y."/>
            <person name="Xie C."/>
            <person name="Zhu B."/>
            <person name="Zhu H."/>
            <person name="Liu S."/>
            <person name="Wang W."/>
            <person name="Chen H."/>
            <person name="Ji Y."/>
        </authorList>
    </citation>
    <scope>NUCLEOTIDE SEQUENCE [LARGE SCALE MRNA]</scope>
    <source>
        <tissue evidence="4">Venom gland</tissue>
    </source>
</reference>
<reference evidence="6" key="2">
    <citation type="journal article" date="2020" name="PLoS ONE">
        <title>Purification and molecular characterization of phospholipase, antigen 5 and hyaluronidases from the venom of the Asian hornet (Vespa velutina).</title>
        <authorList>
            <person name="Monsalve R.I."/>
            <person name="Gutierrez R."/>
            <person name="Hoof I."/>
            <person name="Lombardero M."/>
        </authorList>
    </citation>
    <scope>PROTEIN SEQUENCE OF 1-10</scope>
    <scope>SUBCELLULAR LOCATION</scope>
    <scope>IDENTIFICATION BY MASS SPECTROMETRY</scope>
    <scope>GLYCOSYLATION AT ASN-3</scope>
    <source>
        <tissue evidence="4">Venom</tissue>
    </source>
</reference>
<accession>C0HLL4</accession>
<proteinExistence type="evidence at protein level"/>
<feature type="chain" id="PRO_0000449970" description="Hyaluronidase A">
    <location>
        <begin position="1"/>
        <end position="341"/>
    </location>
</feature>
<feature type="glycosylation site" description="N-linked (GlcNAc...) asparagine" evidence="2 3">
    <location>
        <position position="3"/>
    </location>
</feature>
<feature type="glycosylation site" description="N-linked (GlcNAc...) asparagine" evidence="2">
    <location>
        <position position="68"/>
    </location>
</feature>
<feature type="glycosylation site" description="N-linked (GlcNAc...) asparagine" evidence="2">
    <location>
        <position position="83"/>
    </location>
</feature>
<feature type="disulfide bond" evidence="1">
    <location>
        <begin position="23"/>
        <end position="311"/>
    </location>
</feature>
<feature type="disulfide bond" evidence="1">
    <location>
        <begin position="189"/>
        <end position="201"/>
    </location>
</feature>